<feature type="chain" id="PRO_0000363754" description="O-phosphoserine--tRNA(Cys) ligase">
    <location>
        <begin position="1"/>
        <end position="537"/>
    </location>
</feature>
<feature type="binding site" evidence="1">
    <location>
        <begin position="186"/>
        <end position="188"/>
    </location>
    <ligand>
        <name>substrate</name>
    </ligand>
</feature>
<feature type="binding site" evidence="1">
    <location>
        <begin position="231"/>
        <end position="233"/>
    </location>
    <ligand>
        <name>substrate</name>
    </ligand>
</feature>
<feature type="binding site" evidence="1">
    <location>
        <begin position="273"/>
        <end position="274"/>
    </location>
    <ligand>
        <name>substrate</name>
    </ligand>
</feature>
<feature type="binding site" evidence="1">
    <location>
        <position position="317"/>
    </location>
    <ligand>
        <name>substrate</name>
    </ligand>
</feature>
<keyword id="KW-0030">Aminoacyl-tRNA synthetase</keyword>
<keyword id="KW-0067">ATP-binding</keyword>
<keyword id="KW-0436">Ligase</keyword>
<keyword id="KW-0547">Nucleotide-binding</keyword>
<keyword id="KW-0648">Protein biosynthesis</keyword>
<organism>
    <name type="scientific">Methanococcus vannielii (strain ATCC 35089 / DSM 1224 / JCM 13029 / OCM 148 / SB)</name>
    <dbReference type="NCBI Taxonomy" id="406327"/>
    <lineage>
        <taxon>Archaea</taxon>
        <taxon>Methanobacteriati</taxon>
        <taxon>Methanobacteriota</taxon>
        <taxon>Methanomada group</taxon>
        <taxon>Methanococci</taxon>
        <taxon>Methanococcales</taxon>
        <taxon>Methanococcaceae</taxon>
        <taxon>Methanococcus</taxon>
    </lineage>
</organism>
<sequence>MFKREEIIEMANKDFEKAWIETKGLIKSKRVNESYPRIKPIFGKTHPVNDTIENLRQAYLRMGFEEYINPVIVDERDIYKQFGPEAMAVLDRCFYLAGLPRPDVGLSDEKISQIEKLGINVSCHKESLQKILHGYKKGTLDGDDLVLEISKALEISSEMGLKILEEVFPEFKDLIAVSSKLTLRSHMTSGWFITLSELNGKKPLPFKLFSIDRCFRREQKEDKSHLMTYHSASCVIAGKDVDINDGKAVAEGLLSQFGFTNFKFIPDEKKSKYYTPETQTEVYAYHPKLKEWLEVATFGVYSPVALSKYGIDVPVMNLGLGVERLSMISGNFEDVREMVYPQFYEQSLSDRAISSMVKFDKVPVLDEIYDLTKELIDLCVKNKDITSPCNLKLEKTFIFGKTKKNVKIIVFEKEENKKLLGPSILNEIYVYDGNIIGIPETFEGVKEEFKEFLEKGKVEGVTTGIRYIDALCFKITSKVEEAFVSNTSEFKLKVPIVRSLSDINLKIEEIALKQIMSKNKVIDVRGPVFLNVEVKIE</sequence>
<dbReference type="EC" id="6.1.1.27" evidence="1"/>
<dbReference type="EMBL" id="CP000742">
    <property type="protein sequence ID" value="ABR55462.1"/>
    <property type="molecule type" value="Genomic_DNA"/>
</dbReference>
<dbReference type="RefSeq" id="WP_012066376.1">
    <property type="nucleotide sequence ID" value="NC_009634.1"/>
</dbReference>
<dbReference type="SMR" id="A6USJ0"/>
<dbReference type="STRING" id="406327.Mevan_1570"/>
<dbReference type="GeneID" id="5325555"/>
<dbReference type="KEGG" id="mvn:Mevan_1570"/>
<dbReference type="eggNOG" id="arCOG00411">
    <property type="taxonomic scope" value="Archaea"/>
</dbReference>
<dbReference type="HOGENOM" id="CLU_506822_0_0_2"/>
<dbReference type="OrthoDB" id="145125at2157"/>
<dbReference type="Proteomes" id="UP000001107">
    <property type="component" value="Chromosome"/>
</dbReference>
<dbReference type="GO" id="GO:0005524">
    <property type="term" value="F:ATP binding"/>
    <property type="evidence" value="ECO:0007669"/>
    <property type="project" value="UniProtKB-UniRule"/>
</dbReference>
<dbReference type="GO" id="GO:0043816">
    <property type="term" value="F:phosphoserine-tRNA(Cys) ligase activity"/>
    <property type="evidence" value="ECO:0007669"/>
    <property type="project" value="UniProtKB-EC"/>
</dbReference>
<dbReference type="GO" id="GO:0000049">
    <property type="term" value="F:tRNA binding"/>
    <property type="evidence" value="ECO:0007669"/>
    <property type="project" value="InterPro"/>
</dbReference>
<dbReference type="GO" id="GO:0006412">
    <property type="term" value="P:translation"/>
    <property type="evidence" value="ECO:0007669"/>
    <property type="project" value="UniProtKB-KW"/>
</dbReference>
<dbReference type="GO" id="GO:0043039">
    <property type="term" value="P:tRNA aminoacylation"/>
    <property type="evidence" value="ECO:0007669"/>
    <property type="project" value="UniProtKB-UniRule"/>
</dbReference>
<dbReference type="Gene3D" id="6.10.250.3340">
    <property type="match status" value="1"/>
</dbReference>
<dbReference type="Gene3D" id="6.20.250.20">
    <property type="match status" value="1"/>
</dbReference>
<dbReference type="Gene3D" id="3.30.930.10">
    <property type="entry name" value="Bira Bifunctional Protein, Domain 2"/>
    <property type="match status" value="1"/>
</dbReference>
<dbReference type="HAMAP" id="MF_01674">
    <property type="entry name" value="Sep_tRNA_synth"/>
    <property type="match status" value="1"/>
</dbReference>
<dbReference type="InterPro" id="IPR006195">
    <property type="entry name" value="aa-tRNA-synth_II"/>
</dbReference>
<dbReference type="InterPro" id="IPR045864">
    <property type="entry name" value="aa-tRNA-synth_II/BPL/LPL"/>
</dbReference>
<dbReference type="InterPro" id="IPR005246">
    <property type="entry name" value="O-Pseryl-tRNA(Cys)_ligase"/>
</dbReference>
<dbReference type="InterPro" id="IPR002319">
    <property type="entry name" value="Phenylalanyl-tRNA_Synthase"/>
</dbReference>
<dbReference type="InterPro" id="IPR041590">
    <property type="entry name" value="SepRS_C"/>
</dbReference>
<dbReference type="NCBIfam" id="TIGR00470">
    <property type="entry name" value="sepS"/>
    <property type="match status" value="1"/>
</dbReference>
<dbReference type="Pfam" id="PF18006">
    <property type="entry name" value="SepRS_C"/>
    <property type="match status" value="1"/>
</dbReference>
<dbReference type="Pfam" id="PF01409">
    <property type="entry name" value="tRNA-synt_2d"/>
    <property type="match status" value="1"/>
</dbReference>
<dbReference type="SUPFAM" id="SSF55681">
    <property type="entry name" value="Class II aaRS and biotin synthetases"/>
    <property type="match status" value="1"/>
</dbReference>
<dbReference type="PROSITE" id="PS50862">
    <property type="entry name" value="AA_TRNA_LIGASE_II"/>
    <property type="match status" value="1"/>
</dbReference>
<proteinExistence type="inferred from homology"/>
<reference key="1">
    <citation type="submission" date="2007-06" db="EMBL/GenBank/DDBJ databases">
        <title>Complete sequence of Methanococcus vannielii SB.</title>
        <authorList>
            <consortium name="US DOE Joint Genome Institute"/>
            <person name="Copeland A."/>
            <person name="Lucas S."/>
            <person name="Lapidus A."/>
            <person name="Barry K."/>
            <person name="Glavina del Rio T."/>
            <person name="Dalin E."/>
            <person name="Tice H."/>
            <person name="Pitluck S."/>
            <person name="Chain P."/>
            <person name="Malfatti S."/>
            <person name="Shin M."/>
            <person name="Vergez L."/>
            <person name="Schmutz J."/>
            <person name="Larimer F."/>
            <person name="Land M."/>
            <person name="Hauser L."/>
            <person name="Kyrpides N."/>
            <person name="Anderson I."/>
            <person name="Sieprawska-Lupa M."/>
            <person name="Whitman W.B."/>
            <person name="Richardson P."/>
        </authorList>
    </citation>
    <scope>NUCLEOTIDE SEQUENCE [LARGE SCALE GENOMIC DNA]</scope>
    <source>
        <strain>ATCC 35089 / DSM 1224 / JCM 13029 / OCM 148 / SB</strain>
    </source>
</reference>
<gene>
    <name evidence="1" type="primary">sepS</name>
    <name type="ordered locus">Mevan_1570</name>
</gene>
<protein>
    <recommendedName>
        <fullName evidence="1">O-phosphoserine--tRNA(Cys) ligase</fullName>
        <shortName evidence="1">O-phosphoserine--tRNA ligase</shortName>
        <ecNumber evidence="1">6.1.1.27</ecNumber>
    </recommendedName>
    <alternativeName>
        <fullName evidence="1">Non-canonical O-phosphoseryl-tRNA(Cys) synthetase</fullName>
    </alternativeName>
    <alternativeName>
        <fullName evidence="1">O-phosphoseryl-tRNA(Cys) synthetase</fullName>
        <shortName evidence="1">SepRS</shortName>
    </alternativeName>
</protein>
<comment type="function">
    <text evidence="1">Catalyzes the attachment of O-phosphoserine (Sep) to tRNA(Cys).</text>
</comment>
<comment type="catalytic activity">
    <reaction evidence="1">
        <text>tRNA(Cys) + O-phospho-L-serine + ATP = O-phospho-L-seryl-tRNA(Cys) + AMP + diphosphate</text>
        <dbReference type="Rhea" id="RHEA:25678"/>
        <dbReference type="Rhea" id="RHEA-COMP:9661"/>
        <dbReference type="Rhea" id="RHEA-COMP:9719"/>
        <dbReference type="ChEBI" id="CHEBI:30616"/>
        <dbReference type="ChEBI" id="CHEBI:33019"/>
        <dbReference type="ChEBI" id="CHEBI:57524"/>
        <dbReference type="ChEBI" id="CHEBI:78442"/>
        <dbReference type="ChEBI" id="CHEBI:78551"/>
        <dbReference type="ChEBI" id="CHEBI:456215"/>
        <dbReference type="EC" id="6.1.1.27"/>
    </reaction>
</comment>
<comment type="subunit">
    <text evidence="1">Homotetramer. Interacts with SepCysS.</text>
</comment>
<comment type="similarity">
    <text evidence="1">Belongs to the class-II aminoacyl-tRNA synthetase family. O-phosphoseryl-tRNA(Cys) synthetase subfamily.</text>
</comment>
<evidence type="ECO:0000255" key="1">
    <source>
        <dbReference type="HAMAP-Rule" id="MF_01674"/>
    </source>
</evidence>
<accession>A6USJ0</accession>
<name>SEPS_METVS</name>